<gene>
    <name evidence="1" type="primary">rpmE2</name>
    <name type="ordered locus">Mlg_2751</name>
</gene>
<reference key="1">
    <citation type="submission" date="2006-08" db="EMBL/GenBank/DDBJ databases">
        <title>Complete sequence of Alkalilimnicola ehrilichei MLHE-1.</title>
        <authorList>
            <person name="Copeland A."/>
            <person name="Lucas S."/>
            <person name="Lapidus A."/>
            <person name="Barry K."/>
            <person name="Detter J.C."/>
            <person name="Glavina del Rio T."/>
            <person name="Hammon N."/>
            <person name="Israni S."/>
            <person name="Dalin E."/>
            <person name="Tice H."/>
            <person name="Pitluck S."/>
            <person name="Sims D."/>
            <person name="Brettin T."/>
            <person name="Bruce D."/>
            <person name="Han C."/>
            <person name="Tapia R."/>
            <person name="Gilna P."/>
            <person name="Schmutz J."/>
            <person name="Larimer F."/>
            <person name="Land M."/>
            <person name="Hauser L."/>
            <person name="Kyrpides N."/>
            <person name="Mikhailova N."/>
            <person name="Oremland R.S."/>
            <person name="Hoeft S.E."/>
            <person name="Switzer-Blum J."/>
            <person name="Kulp T."/>
            <person name="King G."/>
            <person name="Tabita R."/>
            <person name="Witte B."/>
            <person name="Santini J.M."/>
            <person name="Basu P."/>
            <person name="Hollibaugh J.T."/>
            <person name="Xie G."/>
            <person name="Stolz J.F."/>
            <person name="Richardson P."/>
        </authorList>
    </citation>
    <scope>NUCLEOTIDE SEQUENCE [LARGE SCALE GENOMIC DNA]</scope>
    <source>
        <strain>ATCC BAA-1101 / DSM 17681 / MLHE-1</strain>
    </source>
</reference>
<protein>
    <recommendedName>
        <fullName evidence="1">Large ribosomal subunit protein bL31B</fullName>
    </recommendedName>
    <alternativeName>
        <fullName evidence="2">50S ribosomal protein L31 type B</fullName>
    </alternativeName>
</protein>
<name>RL31B_ALKEH</name>
<proteinExistence type="inferred from homology"/>
<organism>
    <name type="scientific">Alkalilimnicola ehrlichii (strain ATCC BAA-1101 / DSM 17681 / MLHE-1)</name>
    <dbReference type="NCBI Taxonomy" id="187272"/>
    <lineage>
        <taxon>Bacteria</taxon>
        <taxon>Pseudomonadati</taxon>
        <taxon>Pseudomonadota</taxon>
        <taxon>Gammaproteobacteria</taxon>
        <taxon>Chromatiales</taxon>
        <taxon>Ectothiorhodospiraceae</taxon>
        <taxon>Alkalilimnicola</taxon>
    </lineage>
</organism>
<evidence type="ECO:0000255" key="1">
    <source>
        <dbReference type="HAMAP-Rule" id="MF_00502"/>
    </source>
</evidence>
<evidence type="ECO:0000305" key="2"/>
<sequence>MKQGIHPKYREVVFQDISSDFAFITRSTVRTNETIQWEDGKEYPLFKVEVSSKSHPFYTGKQRALSSGGRVDQFQKKFGISTGN</sequence>
<dbReference type="EMBL" id="CP000453">
    <property type="protein sequence ID" value="ABI58091.1"/>
    <property type="molecule type" value="Genomic_DNA"/>
</dbReference>
<dbReference type="RefSeq" id="WP_011630484.1">
    <property type="nucleotide sequence ID" value="NC_008340.1"/>
</dbReference>
<dbReference type="SMR" id="Q0A4Z6"/>
<dbReference type="KEGG" id="aeh:Mlg_2751"/>
<dbReference type="eggNOG" id="COG0254">
    <property type="taxonomic scope" value="Bacteria"/>
</dbReference>
<dbReference type="HOGENOM" id="CLU_114306_2_2_6"/>
<dbReference type="OrthoDB" id="9803251at2"/>
<dbReference type="Proteomes" id="UP000001962">
    <property type="component" value="Chromosome"/>
</dbReference>
<dbReference type="GO" id="GO:1990904">
    <property type="term" value="C:ribonucleoprotein complex"/>
    <property type="evidence" value="ECO:0007669"/>
    <property type="project" value="UniProtKB-KW"/>
</dbReference>
<dbReference type="GO" id="GO:0005840">
    <property type="term" value="C:ribosome"/>
    <property type="evidence" value="ECO:0007669"/>
    <property type="project" value="UniProtKB-KW"/>
</dbReference>
<dbReference type="GO" id="GO:0003735">
    <property type="term" value="F:structural constituent of ribosome"/>
    <property type="evidence" value="ECO:0007669"/>
    <property type="project" value="InterPro"/>
</dbReference>
<dbReference type="GO" id="GO:0006412">
    <property type="term" value="P:translation"/>
    <property type="evidence" value="ECO:0007669"/>
    <property type="project" value="UniProtKB-UniRule"/>
</dbReference>
<dbReference type="Gene3D" id="4.10.830.30">
    <property type="entry name" value="Ribosomal protein L31"/>
    <property type="match status" value="1"/>
</dbReference>
<dbReference type="HAMAP" id="MF_00502">
    <property type="entry name" value="Ribosomal_bL31_2"/>
    <property type="match status" value="1"/>
</dbReference>
<dbReference type="InterPro" id="IPR034704">
    <property type="entry name" value="Ribosomal_bL28/bL31-like_sf"/>
</dbReference>
<dbReference type="InterPro" id="IPR002150">
    <property type="entry name" value="Ribosomal_bL31"/>
</dbReference>
<dbReference type="InterPro" id="IPR027493">
    <property type="entry name" value="Ribosomal_bL31_B"/>
</dbReference>
<dbReference type="InterPro" id="IPR042105">
    <property type="entry name" value="Ribosomal_bL31_sf"/>
</dbReference>
<dbReference type="NCBIfam" id="TIGR00105">
    <property type="entry name" value="L31"/>
    <property type="match status" value="1"/>
</dbReference>
<dbReference type="NCBIfam" id="NF002462">
    <property type="entry name" value="PRK01678.1"/>
    <property type="match status" value="1"/>
</dbReference>
<dbReference type="PANTHER" id="PTHR33280">
    <property type="entry name" value="50S RIBOSOMAL PROTEIN L31, CHLOROPLASTIC"/>
    <property type="match status" value="1"/>
</dbReference>
<dbReference type="PANTHER" id="PTHR33280:SF1">
    <property type="entry name" value="LARGE RIBOSOMAL SUBUNIT PROTEIN BL31C"/>
    <property type="match status" value="1"/>
</dbReference>
<dbReference type="Pfam" id="PF01197">
    <property type="entry name" value="Ribosomal_L31"/>
    <property type="match status" value="1"/>
</dbReference>
<dbReference type="PRINTS" id="PR01249">
    <property type="entry name" value="RIBOSOMALL31"/>
</dbReference>
<dbReference type="SUPFAM" id="SSF143800">
    <property type="entry name" value="L28p-like"/>
    <property type="match status" value="1"/>
</dbReference>
<dbReference type="PROSITE" id="PS01143">
    <property type="entry name" value="RIBOSOMAL_L31"/>
    <property type="match status" value="1"/>
</dbReference>
<comment type="subunit">
    <text evidence="1">Part of the 50S ribosomal subunit.</text>
</comment>
<comment type="similarity">
    <text evidence="1">Belongs to the bacterial ribosomal protein bL31 family. Type B subfamily.</text>
</comment>
<accession>Q0A4Z6</accession>
<feature type="chain" id="PRO_1000014681" description="Large ribosomal subunit protein bL31B">
    <location>
        <begin position="1"/>
        <end position="84"/>
    </location>
</feature>
<keyword id="KW-1185">Reference proteome</keyword>
<keyword id="KW-0687">Ribonucleoprotein</keyword>
<keyword id="KW-0689">Ribosomal protein</keyword>